<comment type="function">
    <text evidence="1 2">Subunit 8, of the mitochondrial membrane ATP synthase complex (F(1)F(0) ATP synthase or Complex V) that produces ATP from ADP in the presence of a proton gradient across the membrane which is generated by electron transport complexes of the respiratory chain. ATP synthase complex consist of a soluble F(1) head domain - the catalytic core - and a membrane F(1) domain - the membrane proton channel. These two domains are linked by a central stalk rotating inside the F(1) region and a stationary peripheral stalk. During catalysis, ATP synthesis in the catalytic domain of F(1) is coupled via a rotary mechanism of the central stalk subunits to proton translocation (By similarity). In vivo, can only synthesize ATP although its ATP hydrolase activity can be activated artificially in vitro (By similarity). Part of the complex F(0) domain (By similarity).</text>
</comment>
<comment type="subunit">
    <text evidence="1">Component of the ATP synthase complex composed at least of ATP5F1A/subunit alpha, ATP5F1B/subunit beta, ATP5MC1/subunit c (homooctomer), MT-ATP6/subunit a, MT-ATP8/subunit 8, ATP5ME/subunit e, ATP5MF/subunit f, ATP5MG/subunit g, ATP5MK/subunit k, ATP5MJ/subunit j, ATP5F1C/subunit gamma, ATP5F1D/subunit delta, ATP5F1E/subunit epsilon, ATP5PF/subunit F6, ATP5PB/subunit b, ATP5PD/subunit d, ATP5PO/subunit OSCP. ATP synthase complex consists of a soluble F(1) head domain (subunits alpha(3) and beta(3)) - the catalytic core - and a membrane F(0) domain - the membrane proton channel (subunits c, a, 8, e, f, g, k and j). These two domains are linked by a central stalk (subunits gamma, delta, and epsilon) rotating inside the F1 region and a stationary peripheral stalk (subunits F6, b, d, and OSCP).</text>
</comment>
<comment type="subcellular location">
    <subcellularLocation>
        <location>Mitochondrion membrane</location>
        <topology>Single-pass membrane protein</topology>
    </subcellularLocation>
</comment>
<comment type="similarity">
    <text evidence="5">Belongs to the ATPase protein 8 family.</text>
</comment>
<dbReference type="EMBL" id="L22476">
    <property type="protein sequence ID" value="AAA72037.1"/>
    <property type="molecule type" value="Genomic_DNA"/>
</dbReference>
<dbReference type="RefSeq" id="YP_001382250.1">
    <property type="nucleotide sequence ID" value="NC_009684.1"/>
</dbReference>
<dbReference type="SMR" id="P50655"/>
<dbReference type="GeneID" id="5405818"/>
<dbReference type="KEGG" id="apla:5405818"/>
<dbReference type="CTD" id="4509"/>
<dbReference type="OrthoDB" id="8734014at2759"/>
<dbReference type="Proteomes" id="UP000694400">
    <property type="component" value="Unplaced"/>
</dbReference>
<dbReference type="GO" id="GO:0031966">
    <property type="term" value="C:mitochondrial membrane"/>
    <property type="evidence" value="ECO:0007669"/>
    <property type="project" value="UniProtKB-SubCell"/>
</dbReference>
<dbReference type="GO" id="GO:0045259">
    <property type="term" value="C:proton-transporting ATP synthase complex"/>
    <property type="evidence" value="ECO:0007669"/>
    <property type="project" value="UniProtKB-KW"/>
</dbReference>
<dbReference type="GO" id="GO:0015078">
    <property type="term" value="F:proton transmembrane transporter activity"/>
    <property type="evidence" value="ECO:0007669"/>
    <property type="project" value="InterPro"/>
</dbReference>
<dbReference type="GO" id="GO:0015986">
    <property type="term" value="P:proton motive force-driven ATP synthesis"/>
    <property type="evidence" value="ECO:0007669"/>
    <property type="project" value="InterPro"/>
</dbReference>
<dbReference type="InterPro" id="IPR001421">
    <property type="entry name" value="ATP8_metazoa"/>
</dbReference>
<dbReference type="InterPro" id="IPR050635">
    <property type="entry name" value="ATPase_protein_8"/>
</dbReference>
<dbReference type="PANTHER" id="PTHR39937">
    <property type="entry name" value="ATP SYNTHASE PROTEIN 8"/>
    <property type="match status" value="1"/>
</dbReference>
<dbReference type="PANTHER" id="PTHR39937:SF1">
    <property type="entry name" value="ATP SYNTHASE PROTEIN 8"/>
    <property type="match status" value="1"/>
</dbReference>
<dbReference type="Pfam" id="PF00895">
    <property type="entry name" value="ATP-synt_8"/>
    <property type="match status" value="1"/>
</dbReference>
<gene>
    <name evidence="1" type="primary">MT-ATP8</name>
    <name type="synonym">ATP8</name>
    <name type="synonym">ATPASE8</name>
    <name type="synonym">MTATP8</name>
</gene>
<geneLocation type="mitochondrion"/>
<organism>
    <name type="scientific">Anas platyrhynchos</name>
    <name type="common">Mallard</name>
    <name type="synonym">Anas boschas</name>
    <dbReference type="NCBI Taxonomy" id="8839"/>
    <lineage>
        <taxon>Eukaryota</taxon>
        <taxon>Metazoa</taxon>
        <taxon>Chordata</taxon>
        <taxon>Craniata</taxon>
        <taxon>Vertebrata</taxon>
        <taxon>Euteleostomi</taxon>
        <taxon>Archelosauria</taxon>
        <taxon>Archosauria</taxon>
        <taxon>Dinosauria</taxon>
        <taxon>Saurischia</taxon>
        <taxon>Theropoda</taxon>
        <taxon>Coelurosauria</taxon>
        <taxon>Aves</taxon>
        <taxon>Neognathae</taxon>
        <taxon>Galloanserae</taxon>
        <taxon>Anseriformes</taxon>
        <taxon>Anatidae</taxon>
        <taxon>Anatinae</taxon>
        <taxon>Anas</taxon>
    </lineage>
</organism>
<keyword id="KW-0066">ATP synthesis</keyword>
<keyword id="KW-0138">CF(0)</keyword>
<keyword id="KW-0375">Hydrogen ion transport</keyword>
<keyword id="KW-0406">Ion transport</keyword>
<keyword id="KW-0472">Membrane</keyword>
<keyword id="KW-0496">Mitochondrion</keyword>
<keyword id="KW-0812">Transmembrane</keyword>
<keyword id="KW-1133">Transmembrane helix</keyword>
<keyword id="KW-0813">Transport</keyword>
<feature type="chain" id="PRO_0000195483" description="ATP synthase F(0) complex subunit 8">
    <location>
        <begin position="1"/>
        <end position="55"/>
    </location>
</feature>
<feature type="transmembrane region" description="Helical" evidence="3">
    <location>
        <begin position="8"/>
        <end position="24"/>
    </location>
</feature>
<feature type="region of interest" description="Disordered" evidence="4">
    <location>
        <begin position="35"/>
        <end position="55"/>
    </location>
</feature>
<evidence type="ECO:0000250" key="1">
    <source>
        <dbReference type="UniProtKB" id="P03928"/>
    </source>
</evidence>
<evidence type="ECO:0000250" key="2">
    <source>
        <dbReference type="UniProtKB" id="P19483"/>
    </source>
</evidence>
<evidence type="ECO:0000255" key="3"/>
<evidence type="ECO:0000256" key="4">
    <source>
        <dbReference type="SAM" id="MobiDB-lite"/>
    </source>
</evidence>
<evidence type="ECO:0000305" key="5"/>
<accession>P50655</accession>
<protein>
    <recommendedName>
        <fullName evidence="1">ATP synthase F(0) complex subunit 8</fullName>
    </recommendedName>
    <alternativeName>
        <fullName>A6L</fullName>
    </alternativeName>
    <alternativeName>
        <fullName>F-ATPase subunit 8</fullName>
    </alternativeName>
</protein>
<reference key="1">
    <citation type="journal article" date="1993" name="J. Mol. Evol.">
        <title>Molecular characterization and evolution of a duck mitochondrial genome.</title>
        <authorList>
            <person name="Ramirez V."/>
            <person name="Savoie P."/>
            <person name="Morais R."/>
        </authorList>
    </citation>
    <scope>NUCLEOTIDE SEQUENCE [GENOMIC DNA]</scope>
    <source>
        <strain>Pekin breed</strain>
        <tissue>Liver</tissue>
    </source>
</reference>
<proteinExistence type="inferred from homology"/>
<name>ATP8_ANAPL</name>
<sequence>MPQLNPAPWFSIMVMTWLTLALLIQPKLLTFTTTNPPSKKPSLITKPTPWAWPWT</sequence>